<gene>
    <name type="primary">tyrA</name>
    <name type="ordered locus">HI_1290</name>
</gene>
<proteinExistence type="evidence at protein level"/>
<accession>P43902</accession>
<reference key="1">
    <citation type="journal article" date="1995" name="Science">
        <title>Whole-genome random sequencing and assembly of Haemophilus influenzae Rd.</title>
        <authorList>
            <person name="Fleischmann R.D."/>
            <person name="Adams M.D."/>
            <person name="White O."/>
            <person name="Clayton R.A."/>
            <person name="Kirkness E.F."/>
            <person name="Kerlavage A.R."/>
            <person name="Bult C.J."/>
            <person name="Tomb J.-F."/>
            <person name="Dougherty B.A."/>
            <person name="Merrick J.M."/>
            <person name="McKenney K."/>
            <person name="Sutton G.G."/>
            <person name="FitzHugh W."/>
            <person name="Fields C.A."/>
            <person name="Gocayne J.D."/>
            <person name="Scott J.D."/>
            <person name="Shirley R."/>
            <person name="Liu L.-I."/>
            <person name="Glodek A."/>
            <person name="Kelley J.M."/>
            <person name="Weidman J.F."/>
            <person name="Phillips C.A."/>
            <person name="Spriggs T."/>
            <person name="Hedblom E."/>
            <person name="Cotton M.D."/>
            <person name="Utterback T.R."/>
            <person name="Hanna M.C."/>
            <person name="Nguyen D.T."/>
            <person name="Saudek D.M."/>
            <person name="Brandon R.C."/>
            <person name="Fine L.D."/>
            <person name="Fritchman J.L."/>
            <person name="Fuhrmann J.L."/>
            <person name="Geoghagen N.S.M."/>
            <person name="Gnehm C.L."/>
            <person name="McDonald L.A."/>
            <person name="Small K.V."/>
            <person name="Fraser C.M."/>
            <person name="Smith H.O."/>
            <person name="Venter J.C."/>
        </authorList>
    </citation>
    <scope>NUCLEOTIDE SEQUENCE [LARGE SCALE GENOMIC DNA]</scope>
    <source>
        <strain>ATCC 51907 / DSM 11121 / KW20 / Rd</strain>
    </source>
</reference>
<protein>
    <recommendedName>
        <fullName>T-protein</fullName>
    </recommendedName>
    <domain>
        <recommendedName>
            <fullName>Chorismate mutase</fullName>
            <shortName>CM</shortName>
            <ecNumber>5.4.99.5</ecNumber>
        </recommendedName>
    </domain>
    <domain>
        <recommendedName>
            <fullName>Prephenate dehydrogenase</fullName>
            <shortName>PDH</shortName>
            <ecNumber>1.3.1.12</ecNumber>
        </recommendedName>
    </domain>
</protein>
<feature type="chain" id="PRO_0000119197" description="T-protein">
    <location>
        <begin position="1"/>
        <end position="377"/>
    </location>
</feature>
<feature type="domain" description="Chorismate mutase" evidence="1">
    <location>
        <begin position="1"/>
        <end position="92"/>
    </location>
</feature>
<feature type="domain" description="Prephenate/arogenate dehydrogenase" evidence="2">
    <location>
        <begin position="101"/>
        <end position="364"/>
    </location>
</feature>
<feature type="strand" evidence="4">
    <location>
        <begin position="103"/>
        <end position="106"/>
    </location>
</feature>
<feature type="turn" evidence="4">
    <location>
        <begin position="107"/>
        <end position="109"/>
    </location>
</feature>
<feature type="helix" evidence="4">
    <location>
        <begin position="111"/>
        <end position="121"/>
    </location>
</feature>
<feature type="turn" evidence="4">
    <location>
        <begin position="122"/>
        <end position="124"/>
    </location>
</feature>
<feature type="strand" evidence="4">
    <location>
        <begin position="127"/>
        <end position="130"/>
    </location>
</feature>
<feature type="helix" evidence="4">
    <location>
        <begin position="135"/>
        <end position="137"/>
    </location>
</feature>
<feature type="helix" evidence="4">
    <location>
        <begin position="138"/>
        <end position="142"/>
    </location>
</feature>
<feature type="strand" evidence="4">
    <location>
        <begin position="146"/>
        <end position="150"/>
    </location>
</feature>
<feature type="helix" evidence="4">
    <location>
        <begin position="154"/>
        <end position="156"/>
    </location>
</feature>
<feature type="helix" evidence="4">
    <location>
        <begin position="157"/>
        <end position="164"/>
    </location>
</feature>
<feature type="helix" evidence="4">
    <location>
        <begin position="165"/>
        <end position="167"/>
    </location>
</feature>
<feature type="strand" evidence="4">
    <location>
        <begin position="172"/>
        <end position="176"/>
    </location>
</feature>
<feature type="helix" evidence="4">
    <location>
        <begin position="182"/>
        <end position="191"/>
    </location>
</feature>
<feature type="strand" evidence="4">
    <location>
        <begin position="193"/>
        <end position="201"/>
    </location>
</feature>
<feature type="strand" evidence="4">
    <location>
        <begin position="214"/>
        <end position="221"/>
    </location>
</feature>
<feature type="helix" evidence="4">
    <location>
        <begin position="223"/>
        <end position="225"/>
    </location>
</feature>
<feature type="helix" evidence="4">
    <location>
        <begin position="227"/>
        <end position="235"/>
    </location>
</feature>
<feature type="strand" evidence="4">
    <location>
        <begin position="239"/>
        <end position="242"/>
    </location>
</feature>
<feature type="helix" evidence="4">
    <location>
        <begin position="245"/>
        <end position="255"/>
    </location>
</feature>
<feature type="helix" evidence="4">
    <location>
        <begin position="257"/>
        <end position="270"/>
    </location>
</feature>
<feature type="helix" evidence="4">
    <location>
        <begin position="277"/>
        <end position="282"/>
    </location>
</feature>
<feature type="helix" evidence="4">
    <location>
        <begin position="286"/>
        <end position="299"/>
    </location>
</feature>
<feature type="helix" evidence="4">
    <location>
        <begin position="303"/>
        <end position="310"/>
    </location>
</feature>
<feature type="helix" evidence="4">
    <location>
        <begin position="317"/>
        <end position="335"/>
    </location>
</feature>
<feature type="helix" evidence="4">
    <location>
        <begin position="339"/>
        <end position="353"/>
    </location>
</feature>
<feature type="helix" evidence="4">
    <location>
        <begin position="356"/>
        <end position="370"/>
    </location>
</feature>
<dbReference type="EC" id="5.4.99.5"/>
<dbReference type="EC" id="1.3.1.12"/>
<dbReference type="EMBL" id="L42023">
    <property type="protein sequence ID" value="AAC22939.1"/>
    <property type="molecule type" value="Genomic_DNA"/>
</dbReference>
<dbReference type="PIR" id="H64114">
    <property type="entry name" value="H64114"/>
</dbReference>
<dbReference type="RefSeq" id="NP_439442.1">
    <property type="nucleotide sequence ID" value="NC_000907.1"/>
</dbReference>
<dbReference type="PDB" id="2PV7">
    <property type="method" value="X-ray"/>
    <property type="resolution" value="2.00 A"/>
    <property type="chains" value="A/B=81-377"/>
</dbReference>
<dbReference type="PDBsum" id="2PV7"/>
<dbReference type="SMR" id="P43902"/>
<dbReference type="STRING" id="71421.HI_1290"/>
<dbReference type="DNASU" id="950220"/>
<dbReference type="EnsemblBacteria" id="AAC22939">
    <property type="protein sequence ID" value="AAC22939"/>
    <property type="gene ID" value="HI_1290"/>
</dbReference>
<dbReference type="KEGG" id="hin:HI_1290"/>
<dbReference type="PATRIC" id="fig|71421.8.peg.1342"/>
<dbReference type="eggNOG" id="COG0287">
    <property type="taxonomic scope" value="Bacteria"/>
</dbReference>
<dbReference type="eggNOG" id="COG1605">
    <property type="taxonomic scope" value="Bacteria"/>
</dbReference>
<dbReference type="HOGENOM" id="CLU_036672_1_1_6"/>
<dbReference type="OrthoDB" id="6198144at2"/>
<dbReference type="PhylomeDB" id="P43902"/>
<dbReference type="BioCyc" id="HINF71421:G1GJ1-1316-MONOMER"/>
<dbReference type="BRENDA" id="1.3.1.12">
    <property type="organism ID" value="2529"/>
</dbReference>
<dbReference type="UniPathway" id="UPA00120">
    <property type="reaction ID" value="UER00203"/>
</dbReference>
<dbReference type="UniPathway" id="UPA00122">
    <property type="reaction ID" value="UER00961"/>
</dbReference>
<dbReference type="EvolutionaryTrace" id="P43902"/>
<dbReference type="Proteomes" id="UP000000579">
    <property type="component" value="Chromosome"/>
</dbReference>
<dbReference type="GO" id="GO:0005737">
    <property type="term" value="C:cytoplasm"/>
    <property type="evidence" value="ECO:0007669"/>
    <property type="project" value="UniProtKB-SubCell"/>
</dbReference>
<dbReference type="GO" id="GO:0004106">
    <property type="term" value="F:chorismate mutase activity"/>
    <property type="evidence" value="ECO:0007669"/>
    <property type="project" value="UniProtKB-EC"/>
</dbReference>
<dbReference type="GO" id="GO:0070403">
    <property type="term" value="F:NAD+ binding"/>
    <property type="evidence" value="ECO:0000318"/>
    <property type="project" value="GO_Central"/>
</dbReference>
<dbReference type="GO" id="GO:0008977">
    <property type="term" value="F:prephenate dehydrogenase (NAD+) activity"/>
    <property type="evidence" value="ECO:0000318"/>
    <property type="project" value="GO_Central"/>
</dbReference>
<dbReference type="GO" id="GO:0004665">
    <property type="term" value="F:prephenate dehydrogenase (NADP+) activity"/>
    <property type="evidence" value="ECO:0007669"/>
    <property type="project" value="InterPro"/>
</dbReference>
<dbReference type="GO" id="GO:0046417">
    <property type="term" value="P:chorismate metabolic process"/>
    <property type="evidence" value="ECO:0007669"/>
    <property type="project" value="InterPro"/>
</dbReference>
<dbReference type="GO" id="GO:0006571">
    <property type="term" value="P:tyrosine biosynthetic process"/>
    <property type="evidence" value="ECO:0000318"/>
    <property type="project" value="GO_Central"/>
</dbReference>
<dbReference type="FunFam" id="1.10.3660.10:FF:000001">
    <property type="entry name" value="T-protein"/>
    <property type="match status" value="1"/>
</dbReference>
<dbReference type="Gene3D" id="1.10.3660.10">
    <property type="entry name" value="6-phosphogluconate dehydrogenase C-terminal like domain"/>
    <property type="match status" value="1"/>
</dbReference>
<dbReference type="Gene3D" id="1.20.59.10">
    <property type="entry name" value="Chorismate mutase"/>
    <property type="match status" value="1"/>
</dbReference>
<dbReference type="Gene3D" id="3.40.50.720">
    <property type="entry name" value="NAD(P)-binding Rossmann-like Domain"/>
    <property type="match status" value="1"/>
</dbReference>
<dbReference type="InterPro" id="IPR008927">
    <property type="entry name" value="6-PGluconate_DH-like_C_sf"/>
</dbReference>
<dbReference type="InterPro" id="IPR008244">
    <property type="entry name" value="Chor_mut/prephenate_DH_T"/>
</dbReference>
<dbReference type="InterPro" id="IPR036263">
    <property type="entry name" value="Chorismate_II_sf"/>
</dbReference>
<dbReference type="InterPro" id="IPR036979">
    <property type="entry name" value="CM_dom_sf"/>
</dbReference>
<dbReference type="InterPro" id="IPR002701">
    <property type="entry name" value="CM_II_prokaryot"/>
</dbReference>
<dbReference type="InterPro" id="IPR011277">
    <property type="entry name" value="CM_T"/>
</dbReference>
<dbReference type="InterPro" id="IPR036291">
    <property type="entry name" value="NAD(P)-bd_dom_sf"/>
</dbReference>
<dbReference type="InterPro" id="IPR046825">
    <property type="entry name" value="PDH_C"/>
</dbReference>
<dbReference type="InterPro" id="IPR046826">
    <property type="entry name" value="PDH_N"/>
</dbReference>
<dbReference type="InterPro" id="IPR050812">
    <property type="entry name" value="Preph/Arog_dehydrog"/>
</dbReference>
<dbReference type="InterPro" id="IPR003099">
    <property type="entry name" value="Prephen_DH"/>
</dbReference>
<dbReference type="NCBIfam" id="TIGR01799">
    <property type="entry name" value="CM_T"/>
    <property type="match status" value="1"/>
</dbReference>
<dbReference type="NCBIfam" id="NF008400">
    <property type="entry name" value="PRK11199.1"/>
    <property type="match status" value="1"/>
</dbReference>
<dbReference type="PANTHER" id="PTHR21363">
    <property type="entry name" value="PREPHENATE DEHYDROGENASE"/>
    <property type="match status" value="1"/>
</dbReference>
<dbReference type="PANTHER" id="PTHR21363:SF0">
    <property type="entry name" value="PREPHENATE DEHYDROGENASE [NADP(+)]"/>
    <property type="match status" value="1"/>
</dbReference>
<dbReference type="Pfam" id="PF01817">
    <property type="entry name" value="CM_2"/>
    <property type="match status" value="1"/>
</dbReference>
<dbReference type="Pfam" id="PF20463">
    <property type="entry name" value="PDH_C"/>
    <property type="match status" value="1"/>
</dbReference>
<dbReference type="Pfam" id="PF02153">
    <property type="entry name" value="PDH_N"/>
    <property type="match status" value="1"/>
</dbReference>
<dbReference type="PIRSF" id="PIRSF001499">
    <property type="entry name" value="Chor_mut_pdh_Tpr"/>
    <property type="match status" value="1"/>
</dbReference>
<dbReference type="SMART" id="SM00830">
    <property type="entry name" value="CM_2"/>
    <property type="match status" value="1"/>
</dbReference>
<dbReference type="SUPFAM" id="SSF48179">
    <property type="entry name" value="6-phosphogluconate dehydrogenase C-terminal domain-like"/>
    <property type="match status" value="1"/>
</dbReference>
<dbReference type="SUPFAM" id="SSF48600">
    <property type="entry name" value="Chorismate mutase II"/>
    <property type="match status" value="1"/>
</dbReference>
<dbReference type="SUPFAM" id="SSF51735">
    <property type="entry name" value="NAD(P)-binding Rossmann-fold domains"/>
    <property type="match status" value="1"/>
</dbReference>
<dbReference type="PROSITE" id="PS51168">
    <property type="entry name" value="CHORISMATE_MUT_2"/>
    <property type="match status" value="1"/>
</dbReference>
<dbReference type="PROSITE" id="PS51176">
    <property type="entry name" value="PDH_ADH"/>
    <property type="match status" value="1"/>
</dbReference>
<evidence type="ECO:0000255" key="1">
    <source>
        <dbReference type="PROSITE-ProRule" id="PRU00515"/>
    </source>
</evidence>
<evidence type="ECO:0000255" key="2">
    <source>
        <dbReference type="PROSITE-ProRule" id="PRU00522"/>
    </source>
</evidence>
<evidence type="ECO:0000305" key="3"/>
<evidence type="ECO:0007829" key="4">
    <source>
        <dbReference type="PDB" id="2PV7"/>
    </source>
</evidence>
<sequence length="377" mass="43022">MSFMEALKDLRSEIDSLDRELIQLFAKRLELVSQVGKVKHQHGLPIYAPEREIAMLQARRLEAEKAGISADLIEDVLRRFMRESYANENQFGFKTINSDIHKIVIVGGYGKLGGLFARYLRASGYPISILDREDWAVAESILANADVVIVSVPINLTLETIERLKPYLTENMLLADLTSVKREPLAKMLEVHTGAVLGLHPMFGADIASMAKQVVVRCDGRFPERYEWLLEQIQIWGAKIYQTNATEHDHNMTYIQALRHFSTFANGLHLSKQPINLANLLALSSPIYRLELAMIGRLFAQDAELYADIIMDKSENLAVIETLKQTYDEALTFFENNDRQGFIDAFHKVRDWFGDYSEQFLKESRQLLQQANDLKQG</sequence>
<organism>
    <name type="scientific">Haemophilus influenzae (strain ATCC 51907 / DSM 11121 / KW20 / Rd)</name>
    <dbReference type="NCBI Taxonomy" id="71421"/>
    <lineage>
        <taxon>Bacteria</taxon>
        <taxon>Pseudomonadati</taxon>
        <taxon>Pseudomonadota</taxon>
        <taxon>Gammaproteobacteria</taxon>
        <taxon>Pasteurellales</taxon>
        <taxon>Pasteurellaceae</taxon>
        <taxon>Haemophilus</taxon>
    </lineage>
</organism>
<comment type="catalytic activity">
    <reaction>
        <text>chorismate = prephenate</text>
        <dbReference type="Rhea" id="RHEA:13897"/>
        <dbReference type="ChEBI" id="CHEBI:29748"/>
        <dbReference type="ChEBI" id="CHEBI:29934"/>
        <dbReference type="EC" id="5.4.99.5"/>
    </reaction>
</comment>
<comment type="catalytic activity">
    <reaction>
        <text>prephenate + NAD(+) = 3-(4-hydroxyphenyl)pyruvate + CO2 + NADH</text>
        <dbReference type="Rhea" id="RHEA:13869"/>
        <dbReference type="ChEBI" id="CHEBI:16526"/>
        <dbReference type="ChEBI" id="CHEBI:29934"/>
        <dbReference type="ChEBI" id="CHEBI:36242"/>
        <dbReference type="ChEBI" id="CHEBI:57540"/>
        <dbReference type="ChEBI" id="CHEBI:57945"/>
        <dbReference type="EC" id="1.3.1.12"/>
    </reaction>
</comment>
<comment type="pathway">
    <text>Amino-acid biosynthesis; L-tyrosine biosynthesis; (4-hydroxyphenyl)pyruvate from prephenate (NAD(+) route): step 1/1.</text>
</comment>
<comment type="pathway">
    <text>Metabolic intermediate biosynthesis; prephenate biosynthesis; prephenate from chorismate: step 1/1.</text>
</comment>
<comment type="subcellular location">
    <subcellularLocation>
        <location>Cytoplasm</location>
    </subcellularLocation>
</comment>
<comment type="similarity">
    <text evidence="3">In the C-terminal section; belongs to the prephenate/arogenate dehydrogenase family.</text>
</comment>
<keyword id="KW-0002">3D-structure</keyword>
<keyword id="KW-0028">Amino-acid biosynthesis</keyword>
<keyword id="KW-0057">Aromatic amino acid biosynthesis</keyword>
<keyword id="KW-0963">Cytoplasm</keyword>
<keyword id="KW-0413">Isomerase</keyword>
<keyword id="KW-0511">Multifunctional enzyme</keyword>
<keyword id="KW-0520">NAD</keyword>
<keyword id="KW-0560">Oxidoreductase</keyword>
<keyword id="KW-1185">Reference proteome</keyword>
<keyword id="KW-0827">Tyrosine biosynthesis</keyword>
<name>TYRA_HAEIN</name>